<proteinExistence type="inferred from homology"/>
<gene>
    <name evidence="1" type="primary">dtd</name>
    <name type="ordered locus">Shewana3_0314</name>
</gene>
<protein>
    <recommendedName>
        <fullName evidence="1">D-aminoacyl-tRNA deacylase</fullName>
        <shortName evidence="1">DTD</shortName>
        <ecNumber evidence="1">3.1.1.96</ecNumber>
    </recommendedName>
    <alternativeName>
        <fullName evidence="1">Gly-tRNA(Ala) deacylase</fullName>
    </alternativeName>
</protein>
<feature type="chain" id="PRO_1000050886" description="D-aminoacyl-tRNA deacylase">
    <location>
        <begin position="1"/>
        <end position="145"/>
    </location>
</feature>
<feature type="short sequence motif" description="Gly-cisPro motif, important for rejection of L-amino acids" evidence="1">
    <location>
        <begin position="137"/>
        <end position="138"/>
    </location>
</feature>
<reference key="1">
    <citation type="submission" date="2006-09" db="EMBL/GenBank/DDBJ databases">
        <title>Complete sequence of chromosome 1 of Shewanella sp. ANA-3.</title>
        <authorList>
            <person name="Copeland A."/>
            <person name="Lucas S."/>
            <person name="Lapidus A."/>
            <person name="Barry K."/>
            <person name="Detter J.C."/>
            <person name="Glavina del Rio T."/>
            <person name="Hammon N."/>
            <person name="Israni S."/>
            <person name="Dalin E."/>
            <person name="Tice H."/>
            <person name="Pitluck S."/>
            <person name="Chertkov O."/>
            <person name="Brettin T."/>
            <person name="Bruce D."/>
            <person name="Han C."/>
            <person name="Tapia R."/>
            <person name="Gilna P."/>
            <person name="Schmutz J."/>
            <person name="Larimer F."/>
            <person name="Land M."/>
            <person name="Hauser L."/>
            <person name="Kyrpides N."/>
            <person name="Kim E."/>
            <person name="Newman D."/>
            <person name="Salticov C."/>
            <person name="Konstantinidis K."/>
            <person name="Klappenback J."/>
            <person name="Tiedje J."/>
            <person name="Richardson P."/>
        </authorList>
    </citation>
    <scope>NUCLEOTIDE SEQUENCE [LARGE SCALE GENOMIC DNA]</scope>
    <source>
        <strain>ANA-3</strain>
    </source>
</reference>
<dbReference type="EC" id="3.1.1.96" evidence="1"/>
<dbReference type="EMBL" id="CP000469">
    <property type="protein sequence ID" value="ABK46557.1"/>
    <property type="molecule type" value="Genomic_DNA"/>
</dbReference>
<dbReference type="RefSeq" id="WP_011715546.1">
    <property type="nucleotide sequence ID" value="NC_008577.1"/>
</dbReference>
<dbReference type="SMR" id="A0KRY8"/>
<dbReference type="STRING" id="94122.Shewana3_0314"/>
<dbReference type="KEGG" id="shn:Shewana3_0314"/>
<dbReference type="eggNOG" id="COG1490">
    <property type="taxonomic scope" value="Bacteria"/>
</dbReference>
<dbReference type="HOGENOM" id="CLU_076901_1_0_6"/>
<dbReference type="OrthoDB" id="9801395at2"/>
<dbReference type="Proteomes" id="UP000002589">
    <property type="component" value="Chromosome"/>
</dbReference>
<dbReference type="GO" id="GO:0005737">
    <property type="term" value="C:cytoplasm"/>
    <property type="evidence" value="ECO:0007669"/>
    <property type="project" value="UniProtKB-SubCell"/>
</dbReference>
<dbReference type="GO" id="GO:0051500">
    <property type="term" value="F:D-tyrosyl-tRNA(Tyr) deacylase activity"/>
    <property type="evidence" value="ECO:0007669"/>
    <property type="project" value="TreeGrafter"/>
</dbReference>
<dbReference type="GO" id="GO:0106026">
    <property type="term" value="F:Gly-tRNA(Ala) deacylase activity"/>
    <property type="evidence" value="ECO:0007669"/>
    <property type="project" value="UniProtKB-UniRule"/>
</dbReference>
<dbReference type="GO" id="GO:0043908">
    <property type="term" value="F:Ser(Gly)-tRNA(Ala) hydrolase activity"/>
    <property type="evidence" value="ECO:0007669"/>
    <property type="project" value="UniProtKB-UniRule"/>
</dbReference>
<dbReference type="GO" id="GO:0000049">
    <property type="term" value="F:tRNA binding"/>
    <property type="evidence" value="ECO:0007669"/>
    <property type="project" value="UniProtKB-UniRule"/>
</dbReference>
<dbReference type="GO" id="GO:0019478">
    <property type="term" value="P:D-amino acid catabolic process"/>
    <property type="evidence" value="ECO:0007669"/>
    <property type="project" value="UniProtKB-UniRule"/>
</dbReference>
<dbReference type="CDD" id="cd00563">
    <property type="entry name" value="Dtyr_deacylase"/>
    <property type="match status" value="1"/>
</dbReference>
<dbReference type="FunFam" id="3.50.80.10:FF:000001">
    <property type="entry name" value="D-aminoacyl-tRNA deacylase"/>
    <property type="match status" value="1"/>
</dbReference>
<dbReference type="Gene3D" id="3.50.80.10">
    <property type="entry name" value="D-tyrosyl-tRNA(Tyr) deacylase"/>
    <property type="match status" value="1"/>
</dbReference>
<dbReference type="HAMAP" id="MF_00518">
    <property type="entry name" value="Deacylase_Dtd"/>
    <property type="match status" value="1"/>
</dbReference>
<dbReference type="InterPro" id="IPR003732">
    <property type="entry name" value="Daa-tRNA_deacyls_DTD"/>
</dbReference>
<dbReference type="InterPro" id="IPR023509">
    <property type="entry name" value="DTD-like_sf"/>
</dbReference>
<dbReference type="NCBIfam" id="TIGR00256">
    <property type="entry name" value="D-aminoacyl-tRNA deacylase"/>
    <property type="match status" value="1"/>
</dbReference>
<dbReference type="PANTHER" id="PTHR10472:SF5">
    <property type="entry name" value="D-AMINOACYL-TRNA DEACYLASE 1"/>
    <property type="match status" value="1"/>
</dbReference>
<dbReference type="PANTHER" id="PTHR10472">
    <property type="entry name" value="D-TYROSYL-TRNA TYR DEACYLASE"/>
    <property type="match status" value="1"/>
</dbReference>
<dbReference type="Pfam" id="PF02580">
    <property type="entry name" value="Tyr_Deacylase"/>
    <property type="match status" value="1"/>
</dbReference>
<dbReference type="SUPFAM" id="SSF69500">
    <property type="entry name" value="DTD-like"/>
    <property type="match status" value="1"/>
</dbReference>
<name>DTD_SHESA</name>
<organism>
    <name type="scientific">Shewanella sp. (strain ANA-3)</name>
    <dbReference type="NCBI Taxonomy" id="94122"/>
    <lineage>
        <taxon>Bacteria</taxon>
        <taxon>Pseudomonadati</taxon>
        <taxon>Pseudomonadota</taxon>
        <taxon>Gammaproteobacteria</taxon>
        <taxon>Alteromonadales</taxon>
        <taxon>Shewanellaceae</taxon>
        <taxon>Shewanella</taxon>
    </lineage>
</organism>
<sequence>MIALIQRVSRASVVVDNQTIGAIDKGLLVLLGVEREDNREKMEKLATKVMSYRVFSDENGKMNLNLTQAGGSLLVVSQFTLAADTGRGLRPSFSGAGTPEQALGLYEDFVAFCRAQGVTTETGQFGADMKVELINDGPVTFNLQV</sequence>
<evidence type="ECO:0000255" key="1">
    <source>
        <dbReference type="HAMAP-Rule" id="MF_00518"/>
    </source>
</evidence>
<comment type="function">
    <text evidence="1">An aminoacyl-tRNA editing enzyme that deacylates mischarged D-aminoacyl-tRNAs. Also deacylates mischarged glycyl-tRNA(Ala), protecting cells against glycine mischarging by AlaRS. Acts via tRNA-based rather than protein-based catalysis; rejects L-amino acids rather than detecting D-amino acids in the active site. By recycling D-aminoacyl-tRNA to D-amino acids and free tRNA molecules, this enzyme counteracts the toxicity associated with the formation of D-aminoacyl-tRNA entities in vivo and helps enforce protein L-homochirality.</text>
</comment>
<comment type="catalytic activity">
    <reaction evidence="1">
        <text>glycyl-tRNA(Ala) + H2O = tRNA(Ala) + glycine + H(+)</text>
        <dbReference type="Rhea" id="RHEA:53744"/>
        <dbReference type="Rhea" id="RHEA-COMP:9657"/>
        <dbReference type="Rhea" id="RHEA-COMP:13640"/>
        <dbReference type="ChEBI" id="CHEBI:15377"/>
        <dbReference type="ChEBI" id="CHEBI:15378"/>
        <dbReference type="ChEBI" id="CHEBI:57305"/>
        <dbReference type="ChEBI" id="CHEBI:78442"/>
        <dbReference type="ChEBI" id="CHEBI:78522"/>
        <dbReference type="EC" id="3.1.1.96"/>
    </reaction>
</comment>
<comment type="catalytic activity">
    <reaction evidence="1">
        <text>a D-aminoacyl-tRNA + H2O = a tRNA + a D-alpha-amino acid + H(+)</text>
        <dbReference type="Rhea" id="RHEA:13953"/>
        <dbReference type="Rhea" id="RHEA-COMP:10123"/>
        <dbReference type="Rhea" id="RHEA-COMP:10124"/>
        <dbReference type="ChEBI" id="CHEBI:15377"/>
        <dbReference type="ChEBI" id="CHEBI:15378"/>
        <dbReference type="ChEBI" id="CHEBI:59871"/>
        <dbReference type="ChEBI" id="CHEBI:78442"/>
        <dbReference type="ChEBI" id="CHEBI:79333"/>
        <dbReference type="EC" id="3.1.1.96"/>
    </reaction>
</comment>
<comment type="subunit">
    <text evidence="1">Homodimer.</text>
</comment>
<comment type="subcellular location">
    <subcellularLocation>
        <location evidence="1">Cytoplasm</location>
    </subcellularLocation>
</comment>
<comment type="domain">
    <text evidence="1">A Gly-cisPro motif from one monomer fits into the active site of the other monomer to allow specific chiral rejection of L-amino acids.</text>
</comment>
<comment type="similarity">
    <text evidence="1">Belongs to the DTD family.</text>
</comment>
<keyword id="KW-0963">Cytoplasm</keyword>
<keyword id="KW-0378">Hydrolase</keyword>
<keyword id="KW-0694">RNA-binding</keyword>
<keyword id="KW-0820">tRNA-binding</keyword>
<accession>A0KRY8</accession>